<keyword id="KW-1035">Host cytoplasm</keyword>
<keyword id="KW-0945">Host-virus interaction</keyword>
<keyword id="KW-1090">Inhibition of host innate immune response by virus</keyword>
<keyword id="KW-0694">RNA-binding</keyword>
<keyword id="KW-0941">Suppressor of RNA silencing</keyword>
<keyword id="KW-0813">Transport</keyword>
<keyword id="KW-0899">Viral immunoevasion</keyword>
<keyword id="KW-0916">Viral movement protein</keyword>
<feature type="chain" id="PRO_0000222578" description="Movement and silencing protein TGBp1">
    <location>
        <begin position="1"/>
        <end position="228"/>
    </location>
</feature>
<feature type="domain" description="(+)RNA virus helicase ATP-binding">
    <location>
        <begin position="1"/>
        <end position="132"/>
    </location>
</feature>
<feature type="domain" description="(+)RNA virus helicase C-terminal">
    <location>
        <begin position="133"/>
        <end position="228"/>
    </location>
</feature>
<protein>
    <recommendedName>
        <fullName>Movement and silencing protein TGBp1</fullName>
    </recommendedName>
    <alternativeName>
        <fullName>25 kDa protein</fullName>
    </alternativeName>
    <alternativeName>
        <fullName>Silencing suppressor P25</fullName>
    </alternativeName>
    <alternativeName>
        <fullName>Triple gene block 1 protein</fullName>
        <shortName>TGBp1</shortName>
    </alternativeName>
</protein>
<organismHost>
    <name type="scientific">Lilium</name>
    <dbReference type="NCBI Taxonomy" id="4688"/>
</organismHost>
<evidence type="ECO:0000250" key="1"/>
<evidence type="ECO:0000305" key="2"/>
<accession>P27330</accession>
<dbReference type="EMBL" id="X15343">
    <property type="protein sequence ID" value="CAA33398.1"/>
    <property type="molecule type" value="Genomic_RNA"/>
</dbReference>
<dbReference type="GO" id="GO:0030430">
    <property type="term" value="C:host cell cytoplasm"/>
    <property type="evidence" value="ECO:0007669"/>
    <property type="project" value="UniProtKB-SubCell"/>
</dbReference>
<dbReference type="GO" id="GO:0005524">
    <property type="term" value="F:ATP binding"/>
    <property type="evidence" value="ECO:0007669"/>
    <property type="project" value="InterPro"/>
</dbReference>
<dbReference type="GO" id="GO:0003723">
    <property type="term" value="F:RNA binding"/>
    <property type="evidence" value="ECO:0007669"/>
    <property type="project" value="UniProtKB-KW"/>
</dbReference>
<dbReference type="GO" id="GO:0052170">
    <property type="term" value="P:symbiont-mediated suppression of host innate immune response"/>
    <property type="evidence" value="ECO:0007669"/>
    <property type="project" value="UniProtKB-KW"/>
</dbReference>
<dbReference type="GO" id="GO:0046740">
    <property type="term" value="P:transport of virus in host, cell to cell"/>
    <property type="evidence" value="ECO:0007669"/>
    <property type="project" value="UniProtKB-KW"/>
</dbReference>
<dbReference type="InterPro" id="IPR027351">
    <property type="entry name" value="(+)RNA_virus_helicase_core_dom"/>
</dbReference>
<dbReference type="Pfam" id="PF01443">
    <property type="entry name" value="Viral_helicase1"/>
    <property type="match status" value="1"/>
</dbReference>
<dbReference type="PROSITE" id="PS51657">
    <property type="entry name" value="PSRV_HELICASE"/>
    <property type="match status" value="1"/>
</dbReference>
<reference key="1">
    <citation type="journal article" date="1990" name="J. Gen. Virol.">
        <title>Homologies between the genomes of a carlavirus (lily symptomless virus) and a potexvirus (lily virus X) from lily plants.</title>
        <authorList>
            <person name="Memelink J."/>
            <person name="van der Vlugt C.I.M."/>
            <person name="Linthorst H.J.M."/>
            <person name="Derks A.F.L.M."/>
            <person name="Asjes C.J."/>
            <person name="Bol J.F."/>
        </authorList>
    </citation>
    <scope>NUCLEOTIDE SEQUENCE [GENOMIC RNA]</scope>
</reference>
<name>TGB1_LSV</name>
<gene>
    <name type="ORF">ORF2</name>
</gene>
<sequence>MDVLLSLLSEFGFERLSSELSLPIVVHSVPGGGKSSLIRKLINKDRRFSAYTFGLEDCESITGVRIKKAHASIPRSEFVVFDEYIEGDTPPWAFAVFADPLQGGPGPVLRAHFIKRRSHRFGKCTAQLLNDLSYEVESDLADVVQIQGLYETDLQGTVVYYEACVGNLLRAHSVPAYYISEIRGQTFESVTFVTSENYPVDRALAFQCLTRHRSSLLILSPNATYTAS</sequence>
<proteinExistence type="inferred from homology"/>
<organism>
    <name type="scientific">Lily symptomless virus</name>
    <name type="common">LSV</name>
    <dbReference type="NCBI Taxonomy" id="12173"/>
    <lineage>
        <taxon>Viruses</taxon>
        <taxon>Riboviria</taxon>
        <taxon>Orthornavirae</taxon>
        <taxon>Kitrinoviricota</taxon>
        <taxon>Alsuviricetes</taxon>
        <taxon>Tymovirales</taxon>
        <taxon>Betaflexiviridae</taxon>
        <taxon>Quinvirinae</taxon>
        <taxon>Carlavirus</taxon>
    </lineage>
</organism>
<comment type="function">
    <text evidence="1">Transports viral genome to neighboring plant cells directly through plasmosdesmata, without any budding. The movement protein allows efficient cell to cell propagation, by bypassing the host cell wall barrier. Increases plasmodesma size exclusion limit. Acts as a suppressor of RNA-mediated gene silencing, also known as post-transcriptional gene silencing (PTGS), a mechanism of plant viral defense that limits the accumulation of viral RNAs (By similarity).</text>
</comment>
<comment type="subunit">
    <text evidence="1">Homodimer and homooligomer. Interacts with capsid protein. Interacts with host AGO1; this interaction targets the host protein for degradation, thereby suppressing the antiviral RNA silencing (By similarity).</text>
</comment>
<comment type="subcellular location">
    <subcellularLocation>
        <location evidence="1">Host cytoplasm</location>
    </subcellularLocation>
</comment>
<comment type="miscellaneous">
    <text>TGBp1, TGBp2 and TGBp3 seem to act together for cell-to-cell propagation. TGBp1 is the main movement protein that physically cross the plasmodesma with the viral genome. TGBp2 and TGBp3 would facilitate TGBp1 function.</text>
</comment>
<comment type="similarity">
    <text evidence="2">Belongs to the Tymovirales TGBp1 protein family.</text>
</comment>